<reference key="1">
    <citation type="submission" date="1994-01" db="EMBL/GenBank/DDBJ databases">
        <authorList>
            <person name="Mingorance J."/>
            <person name="Tanaka S."/>
            <person name="Tominaga A."/>
            <person name="Enomoto M."/>
        </authorList>
    </citation>
    <scope>NUCLEOTIDE SEQUENCE [GENOMIC DNA]</scope>
</reference>
<protein>
    <recommendedName>
        <fullName>Repressor of phase 1 flagellin gene</fullName>
    </recommendedName>
</protein>
<sequence length="179" mass="20464">MECMAVNDISYGREAEIWPRDYSMLARRVQFLRFNDIPVRLVSNNARIIIGYIAKFNPRENLILASDKPKGNKRIEVKLESLAILEELSGNDAFNLSLVPTDEFNLQQYTPSRRDYFSICNKCYKQGVGIKIYMKYGQVLTGKTTGVNACQVGVRTSNGNHMQVMFDWVSRITSSDYAE</sequence>
<comment type="function">
    <text>Transcriptional repressor of the FliC phase-1 flagellin.</text>
</comment>
<gene>
    <name type="primary">fljA</name>
</gene>
<accession>P52618</accession>
<name>FLJA_SALAB</name>
<proteinExistence type="predicted"/>
<dbReference type="EMBL" id="D26167">
    <property type="protein sequence ID" value="BAA05155.1"/>
    <property type="molecule type" value="Genomic_DNA"/>
</dbReference>
<dbReference type="SMR" id="P52618"/>
<dbReference type="GO" id="GO:0003677">
    <property type="term" value="F:DNA binding"/>
    <property type="evidence" value="ECO:0007669"/>
    <property type="project" value="UniProtKB-KW"/>
</dbReference>
<dbReference type="GO" id="GO:0003700">
    <property type="term" value="F:DNA-binding transcription factor activity"/>
    <property type="evidence" value="ECO:0007669"/>
    <property type="project" value="InterPro"/>
</dbReference>
<dbReference type="InterPro" id="IPR003223">
    <property type="entry name" value="Flag1_repressor"/>
</dbReference>
<dbReference type="Pfam" id="PF03614">
    <property type="entry name" value="Flag1_repress"/>
    <property type="match status" value="1"/>
</dbReference>
<keyword id="KW-0238">DNA-binding</keyword>
<keyword id="KW-0678">Repressor</keyword>
<keyword id="KW-0804">Transcription</keyword>
<keyword id="KW-0805">Transcription regulation</keyword>
<feature type="chain" id="PRO_0000087292" description="Repressor of phase 1 flagellin gene">
    <location>
        <begin position="1"/>
        <end position="179"/>
    </location>
</feature>
<organism>
    <name type="scientific">Salmonella abony</name>
    <dbReference type="NCBI Taxonomy" id="29482"/>
    <lineage>
        <taxon>Bacteria</taxon>
        <taxon>Pseudomonadati</taxon>
        <taxon>Pseudomonadota</taxon>
        <taxon>Gammaproteobacteria</taxon>
        <taxon>Enterobacterales</taxon>
        <taxon>Enterobacteriaceae</taxon>
        <taxon>Salmonella</taxon>
    </lineage>
</organism>